<organism>
    <name type="scientific">Arabidopsis thaliana</name>
    <name type="common">Mouse-ear cress</name>
    <dbReference type="NCBI Taxonomy" id="3702"/>
    <lineage>
        <taxon>Eukaryota</taxon>
        <taxon>Viridiplantae</taxon>
        <taxon>Streptophyta</taxon>
        <taxon>Embryophyta</taxon>
        <taxon>Tracheophyta</taxon>
        <taxon>Spermatophyta</taxon>
        <taxon>Magnoliopsida</taxon>
        <taxon>eudicotyledons</taxon>
        <taxon>Gunneridae</taxon>
        <taxon>Pentapetalae</taxon>
        <taxon>rosids</taxon>
        <taxon>malvids</taxon>
        <taxon>Brassicales</taxon>
        <taxon>Brassicaceae</taxon>
        <taxon>Camelineae</taxon>
        <taxon>Arabidopsis</taxon>
    </lineage>
</organism>
<reference key="1">
    <citation type="journal article" date="2000" name="Nature">
        <title>Sequence and analysis of chromosome 1 of the plant Arabidopsis thaliana.</title>
        <authorList>
            <person name="Theologis A."/>
            <person name="Ecker J.R."/>
            <person name="Palm C.J."/>
            <person name="Federspiel N.A."/>
            <person name="Kaul S."/>
            <person name="White O."/>
            <person name="Alonso J."/>
            <person name="Altafi H."/>
            <person name="Araujo R."/>
            <person name="Bowman C.L."/>
            <person name="Brooks S.Y."/>
            <person name="Buehler E."/>
            <person name="Chan A."/>
            <person name="Chao Q."/>
            <person name="Chen H."/>
            <person name="Cheuk R.F."/>
            <person name="Chin C.W."/>
            <person name="Chung M.K."/>
            <person name="Conn L."/>
            <person name="Conway A.B."/>
            <person name="Conway A.R."/>
            <person name="Creasy T.H."/>
            <person name="Dewar K."/>
            <person name="Dunn P."/>
            <person name="Etgu P."/>
            <person name="Feldblyum T.V."/>
            <person name="Feng J.-D."/>
            <person name="Fong B."/>
            <person name="Fujii C.Y."/>
            <person name="Gill J.E."/>
            <person name="Goldsmith A.D."/>
            <person name="Haas B."/>
            <person name="Hansen N.F."/>
            <person name="Hughes B."/>
            <person name="Huizar L."/>
            <person name="Hunter J.L."/>
            <person name="Jenkins J."/>
            <person name="Johnson-Hopson C."/>
            <person name="Khan S."/>
            <person name="Khaykin E."/>
            <person name="Kim C.J."/>
            <person name="Koo H.L."/>
            <person name="Kremenetskaia I."/>
            <person name="Kurtz D.B."/>
            <person name="Kwan A."/>
            <person name="Lam B."/>
            <person name="Langin-Hooper S."/>
            <person name="Lee A."/>
            <person name="Lee J.M."/>
            <person name="Lenz C.A."/>
            <person name="Li J.H."/>
            <person name="Li Y.-P."/>
            <person name="Lin X."/>
            <person name="Liu S.X."/>
            <person name="Liu Z.A."/>
            <person name="Luros J.S."/>
            <person name="Maiti R."/>
            <person name="Marziali A."/>
            <person name="Militscher J."/>
            <person name="Miranda M."/>
            <person name="Nguyen M."/>
            <person name="Nierman W.C."/>
            <person name="Osborne B.I."/>
            <person name="Pai G."/>
            <person name="Peterson J."/>
            <person name="Pham P.K."/>
            <person name="Rizzo M."/>
            <person name="Rooney T."/>
            <person name="Rowley D."/>
            <person name="Sakano H."/>
            <person name="Salzberg S.L."/>
            <person name="Schwartz J.R."/>
            <person name="Shinn P."/>
            <person name="Southwick A.M."/>
            <person name="Sun H."/>
            <person name="Tallon L.J."/>
            <person name="Tambunga G."/>
            <person name="Toriumi M.J."/>
            <person name="Town C.D."/>
            <person name="Utterback T."/>
            <person name="Van Aken S."/>
            <person name="Vaysberg M."/>
            <person name="Vysotskaia V.S."/>
            <person name="Walker M."/>
            <person name="Wu D."/>
            <person name="Yu G."/>
            <person name="Fraser C.M."/>
            <person name="Venter J.C."/>
            <person name="Davis R.W."/>
        </authorList>
    </citation>
    <scope>NUCLEOTIDE SEQUENCE [LARGE SCALE GENOMIC DNA]</scope>
    <source>
        <strain>cv. Columbia</strain>
    </source>
</reference>
<reference key="2">
    <citation type="journal article" date="2017" name="Plant J.">
        <title>Araport11: a complete reannotation of the Arabidopsis thaliana reference genome.</title>
        <authorList>
            <person name="Cheng C.Y."/>
            <person name="Krishnakumar V."/>
            <person name="Chan A.P."/>
            <person name="Thibaud-Nissen F."/>
            <person name="Schobel S."/>
            <person name="Town C.D."/>
        </authorList>
    </citation>
    <scope>GENOME REANNOTATION</scope>
    <source>
        <strain>cv. Columbia</strain>
    </source>
</reference>
<reference key="3">
    <citation type="journal article" date="2002" name="Science">
        <title>Functional annotation of a full-length Arabidopsis cDNA collection.</title>
        <authorList>
            <person name="Seki M."/>
            <person name="Narusaka M."/>
            <person name="Kamiya A."/>
            <person name="Ishida J."/>
            <person name="Satou M."/>
            <person name="Sakurai T."/>
            <person name="Nakajima M."/>
            <person name="Enju A."/>
            <person name="Akiyama K."/>
            <person name="Oono Y."/>
            <person name="Muramatsu M."/>
            <person name="Hayashizaki Y."/>
            <person name="Kawai J."/>
            <person name="Carninci P."/>
            <person name="Itoh M."/>
            <person name="Ishii Y."/>
            <person name="Arakawa T."/>
            <person name="Shibata K."/>
            <person name="Shinagawa A."/>
            <person name="Shinozaki K."/>
        </authorList>
    </citation>
    <scope>NUCLEOTIDE SEQUENCE [LARGE SCALE MRNA]</scope>
    <source>
        <strain>cv. Columbia</strain>
    </source>
</reference>
<reference key="4">
    <citation type="journal article" date="2003" name="Science">
        <title>Empirical analysis of transcriptional activity in the Arabidopsis genome.</title>
        <authorList>
            <person name="Yamada K."/>
            <person name="Lim J."/>
            <person name="Dale J.M."/>
            <person name="Chen H."/>
            <person name="Shinn P."/>
            <person name="Palm C.J."/>
            <person name="Southwick A.M."/>
            <person name="Wu H.C."/>
            <person name="Kim C.J."/>
            <person name="Nguyen M."/>
            <person name="Pham P.K."/>
            <person name="Cheuk R.F."/>
            <person name="Karlin-Newmann G."/>
            <person name="Liu S.X."/>
            <person name="Lam B."/>
            <person name="Sakano H."/>
            <person name="Wu T."/>
            <person name="Yu G."/>
            <person name="Miranda M."/>
            <person name="Quach H.L."/>
            <person name="Tripp M."/>
            <person name="Chang C.H."/>
            <person name="Lee J.M."/>
            <person name="Toriumi M.J."/>
            <person name="Chan M.M."/>
            <person name="Tang C.C."/>
            <person name="Onodera C.S."/>
            <person name="Deng J.M."/>
            <person name="Akiyama K."/>
            <person name="Ansari Y."/>
            <person name="Arakawa T."/>
            <person name="Banh J."/>
            <person name="Banno F."/>
            <person name="Bowser L."/>
            <person name="Brooks S.Y."/>
            <person name="Carninci P."/>
            <person name="Chao Q."/>
            <person name="Choy N."/>
            <person name="Enju A."/>
            <person name="Goldsmith A.D."/>
            <person name="Gurjal M."/>
            <person name="Hansen N.F."/>
            <person name="Hayashizaki Y."/>
            <person name="Johnson-Hopson C."/>
            <person name="Hsuan V.W."/>
            <person name="Iida K."/>
            <person name="Karnes M."/>
            <person name="Khan S."/>
            <person name="Koesema E."/>
            <person name="Ishida J."/>
            <person name="Jiang P.X."/>
            <person name="Jones T."/>
            <person name="Kawai J."/>
            <person name="Kamiya A."/>
            <person name="Meyers C."/>
            <person name="Nakajima M."/>
            <person name="Narusaka M."/>
            <person name="Seki M."/>
            <person name="Sakurai T."/>
            <person name="Satou M."/>
            <person name="Tamse R."/>
            <person name="Vaysberg M."/>
            <person name="Wallender E.K."/>
            <person name="Wong C."/>
            <person name="Yamamura Y."/>
            <person name="Yuan S."/>
            <person name="Shinozaki K."/>
            <person name="Davis R.W."/>
            <person name="Theologis A."/>
            <person name="Ecker J.R."/>
        </authorList>
    </citation>
    <scope>NUCLEOTIDE SEQUENCE [LARGE SCALE MRNA]</scope>
    <source>
        <strain>cv. Columbia</strain>
    </source>
</reference>
<reference key="5">
    <citation type="submission" date="2006-07" db="EMBL/GenBank/DDBJ databases">
        <title>Large-scale analysis of RIKEN Arabidopsis full-length (RAFL) cDNAs.</title>
        <authorList>
            <person name="Totoki Y."/>
            <person name="Seki M."/>
            <person name="Ishida J."/>
            <person name="Nakajima M."/>
            <person name="Enju A."/>
            <person name="Kamiya A."/>
            <person name="Narusaka M."/>
            <person name="Shin-i T."/>
            <person name="Nakagawa M."/>
            <person name="Sakamoto N."/>
            <person name="Oishi K."/>
            <person name="Kohara Y."/>
            <person name="Kobayashi M."/>
            <person name="Toyoda A."/>
            <person name="Sakaki Y."/>
            <person name="Sakurai T."/>
            <person name="Iida K."/>
            <person name="Akiyama K."/>
            <person name="Satou M."/>
            <person name="Toyoda T."/>
            <person name="Konagaya A."/>
            <person name="Carninci P."/>
            <person name="Kawai J."/>
            <person name="Hayashizaki Y."/>
            <person name="Shinozaki K."/>
        </authorList>
    </citation>
    <scope>NUCLEOTIDE SEQUENCE [LARGE SCALE MRNA]</scope>
    <source>
        <strain>cv. Columbia</strain>
    </source>
</reference>
<reference key="6">
    <citation type="journal article" date="2002" name="Plant Mol. Biol.">
        <title>Auxin-responsive gene expression: genes, promoters and regulatory factors.</title>
        <authorList>
            <person name="Hagen G."/>
            <person name="Guilfoyle T.J."/>
        </authorList>
    </citation>
    <scope>GENE FAMILY</scope>
    <scope>NOMENCLATURE</scope>
</reference>
<reference key="7">
    <citation type="journal article" date="2013" name="Plant Cell Physiol.">
        <title>Tissue-specific expression of SMALL AUXIN UP RNA41 differentially regulates cell expansion and root meristem patterning in Arabidopsis.</title>
        <authorList>
            <person name="Kong Y."/>
            <person name="Zhu Y."/>
            <person name="Gao C."/>
            <person name="She W."/>
            <person name="Lin W."/>
            <person name="Chen Y."/>
            <person name="Han N."/>
            <person name="Bian H."/>
            <person name="Zhu M."/>
            <person name="Wang J."/>
        </authorList>
    </citation>
    <scope>FUNCTION</scope>
    <scope>SUBCELLULAR LOCATION</scope>
    <scope>TISSUE SPECIFICITY</scope>
    <scope>DEVELOPMENTAL STAGE</scope>
    <scope>INDUCTION BY AUXIN</scope>
</reference>
<evidence type="ECO:0000269" key="1">
    <source>
    </source>
</evidence>
<evidence type="ECO:0000303" key="2">
    <source>
    </source>
</evidence>
<evidence type="ECO:0000305" key="3"/>
<evidence type="ECO:0000312" key="4">
    <source>
        <dbReference type="Araport" id="AT1G16510"/>
    </source>
</evidence>
<evidence type="ECO:0000312" key="5">
    <source>
        <dbReference type="EMBL" id="AAD34702.1"/>
    </source>
</evidence>
<proteinExistence type="evidence at transcript level"/>
<sequence>MKHLIRRLSRVADSSSEFSIRRSTSSFRNRRGHHRLHAPPPPWSICPARRVNTVPAGHVPVYVGEEMERFVVSAELMNHPIFVGLLNRSAQEYGYAQKGVLHIPCHVIVFERVVETLRLGGFEGSGDLENLVASLLSGDELIPETTE</sequence>
<comment type="function">
    <text evidence="1">Plays a role in the regulation of cell expansion, root meristem patterning and auxin transport.</text>
</comment>
<comment type="subcellular location">
    <subcellularLocation>
        <location evidence="1">Cytoplasm</location>
    </subcellularLocation>
</comment>
<comment type="tissue specificity">
    <text evidence="1">Specifically expressed in the quiescent center and cortex or endodermis initials of root stem niches. Expressed in vascular tissues from hypocotyls, petioles and cotyledons.</text>
</comment>
<comment type="developmental stage">
    <text evidence="1">During lateral root development, expressed in the prospective quiescent center of lateral root primordia. In newly formed lateral roots, strongly expressed in the quiescent center and initial cells and weakly expressed in the endodermis.</text>
</comment>
<comment type="induction">
    <text evidence="1">By auxin.</text>
</comment>
<comment type="miscellaneous">
    <text evidence="1">Plants over-expressing SAUR41 display pleiotropic auxin-related phenotypes. These phenotypes include elongated hypocotyls, increased length of primary roots, increased numbers of lateral roots, increased vegetative biomass, twisted inflorescence stems, overexpanded petals, reduced seed setting and increased basipetal auxin transport in hypocotyls.</text>
</comment>
<comment type="similarity">
    <text evidence="3">Belongs to the ARG7 family.</text>
</comment>
<protein>
    <recommendedName>
        <fullName evidence="3">Auxin-responsive protein SAUR41</fullName>
    </recommendedName>
    <alternativeName>
        <fullName evidence="2">Protein SMALL AUXIN UP RNA 41</fullName>
    </alternativeName>
</protein>
<gene>
    <name evidence="2" type="primary">SAUR41</name>
    <name evidence="4" type="ordered locus">At1g16510</name>
    <name evidence="5" type="ORF">F3O9.31</name>
</gene>
<dbReference type="EMBL" id="AC006341">
    <property type="protein sequence ID" value="AAD34702.1"/>
    <property type="molecule type" value="Genomic_DNA"/>
</dbReference>
<dbReference type="EMBL" id="CP002684">
    <property type="protein sequence ID" value="AEE29463.1"/>
    <property type="molecule type" value="Genomic_DNA"/>
</dbReference>
<dbReference type="EMBL" id="AK117413">
    <property type="protein sequence ID" value="BAC42079.1"/>
    <property type="molecule type" value="mRNA"/>
</dbReference>
<dbReference type="EMBL" id="AF348577">
    <property type="protein sequence ID" value="AAK15548.1"/>
    <property type="molecule type" value="mRNA"/>
</dbReference>
<dbReference type="EMBL" id="BT003061">
    <property type="protein sequence ID" value="AAO23626.1"/>
    <property type="molecule type" value="mRNA"/>
</dbReference>
<dbReference type="EMBL" id="AK227586">
    <property type="protein sequence ID" value="BAE99579.1"/>
    <property type="molecule type" value="mRNA"/>
</dbReference>
<dbReference type="PIR" id="F86300">
    <property type="entry name" value="F86300"/>
</dbReference>
<dbReference type="RefSeq" id="NP_173100.1">
    <property type="nucleotide sequence ID" value="NM_101516.4"/>
</dbReference>
<dbReference type="FunCoup" id="Q9SA49">
    <property type="interactions" value="289"/>
</dbReference>
<dbReference type="STRING" id="3702.Q9SA49"/>
<dbReference type="PaxDb" id="3702-AT1G16510.1"/>
<dbReference type="EnsemblPlants" id="AT1G16510.1">
    <property type="protein sequence ID" value="AT1G16510.1"/>
    <property type="gene ID" value="AT1G16510"/>
</dbReference>
<dbReference type="GeneID" id="838221"/>
<dbReference type="Gramene" id="AT1G16510.1">
    <property type="protein sequence ID" value="AT1G16510.1"/>
    <property type="gene ID" value="AT1G16510"/>
</dbReference>
<dbReference type="KEGG" id="ath:AT1G16510"/>
<dbReference type="Araport" id="AT1G16510"/>
<dbReference type="TAIR" id="AT1G16510">
    <property type="gene designation" value="SAUR41"/>
</dbReference>
<dbReference type="eggNOG" id="ENOG502S1QJ">
    <property type="taxonomic scope" value="Eukaryota"/>
</dbReference>
<dbReference type="HOGENOM" id="CLU_098106_7_1_1"/>
<dbReference type="InParanoid" id="Q9SA49"/>
<dbReference type="OMA" id="WSICPAR"/>
<dbReference type="OrthoDB" id="838391at2759"/>
<dbReference type="PhylomeDB" id="Q9SA49"/>
<dbReference type="PRO" id="PR:Q9SA49"/>
<dbReference type="Proteomes" id="UP000006548">
    <property type="component" value="Chromosome 1"/>
</dbReference>
<dbReference type="ExpressionAtlas" id="Q9SA49">
    <property type="expression patterns" value="baseline and differential"/>
</dbReference>
<dbReference type="GO" id="GO:0005737">
    <property type="term" value="C:cytoplasm"/>
    <property type="evidence" value="ECO:0000314"/>
    <property type="project" value="TAIR"/>
</dbReference>
<dbReference type="GO" id="GO:0060918">
    <property type="term" value="P:auxin transport"/>
    <property type="evidence" value="ECO:0000315"/>
    <property type="project" value="TAIR"/>
</dbReference>
<dbReference type="GO" id="GO:0009734">
    <property type="term" value="P:auxin-activated signaling pathway"/>
    <property type="evidence" value="ECO:0007669"/>
    <property type="project" value="UniProtKB-KW"/>
</dbReference>
<dbReference type="GO" id="GO:0009958">
    <property type="term" value="P:positive gravitropism"/>
    <property type="evidence" value="ECO:0000315"/>
    <property type="project" value="TAIR"/>
</dbReference>
<dbReference type="GO" id="GO:0090057">
    <property type="term" value="P:root radial pattern formation"/>
    <property type="evidence" value="ECO:0000315"/>
    <property type="project" value="TAIR"/>
</dbReference>
<dbReference type="InterPro" id="IPR003676">
    <property type="entry name" value="SAUR_fam"/>
</dbReference>
<dbReference type="PANTHER" id="PTHR31374">
    <property type="entry name" value="AUXIN-INDUCED PROTEIN-LIKE-RELATED"/>
    <property type="match status" value="1"/>
</dbReference>
<dbReference type="PANTHER" id="PTHR31374:SF254">
    <property type="entry name" value="AUXIN-RESPONSIVE PROTEIN SAUR41"/>
    <property type="match status" value="1"/>
</dbReference>
<dbReference type="Pfam" id="PF02519">
    <property type="entry name" value="Auxin_inducible"/>
    <property type="match status" value="1"/>
</dbReference>
<name>SAU41_ARATH</name>
<feature type="chain" id="PRO_0000433070" description="Auxin-responsive protein SAUR41">
    <location>
        <begin position="1"/>
        <end position="147"/>
    </location>
</feature>
<keyword id="KW-0927">Auxin signaling pathway</keyword>
<keyword id="KW-0963">Cytoplasm</keyword>
<keyword id="KW-0217">Developmental protein</keyword>
<keyword id="KW-0341">Growth regulation</keyword>
<keyword id="KW-1185">Reference proteome</keyword>
<accession>Q9SA49</accession>